<name>PDI12_ORYSJ</name>
<reference key="1">
    <citation type="journal article" date="2005" name="Plant Physiol.">
        <title>Phylogenetic analyses identify 10 classes of the protein disulfide isomerase family in plants, including single-domain protein disulfide isomerase-related proteins.</title>
        <authorList>
            <person name="Houston N.L."/>
            <person name="Fan C."/>
            <person name="Xiang J.Q."/>
            <person name="Schulze J.M."/>
            <person name="Jung R."/>
            <person name="Boston R.S."/>
        </authorList>
    </citation>
    <scope>NUCLEOTIDE SEQUENCE [MRNA]</scope>
    <scope>GENE FAMILY</scope>
    <scope>NOMENCLATURE</scope>
    <source>
        <strain>cv. Nipponbare</strain>
    </source>
</reference>
<reference key="2">
    <citation type="journal article" date="2002" name="Nature">
        <title>Sequence and analysis of rice chromosome 4.</title>
        <authorList>
            <person name="Feng Q."/>
            <person name="Zhang Y."/>
            <person name="Hao P."/>
            <person name="Wang S."/>
            <person name="Fu G."/>
            <person name="Huang Y."/>
            <person name="Li Y."/>
            <person name="Zhu J."/>
            <person name="Liu Y."/>
            <person name="Hu X."/>
            <person name="Jia P."/>
            <person name="Zhang Y."/>
            <person name="Zhao Q."/>
            <person name="Ying K."/>
            <person name="Yu S."/>
            <person name="Tang Y."/>
            <person name="Weng Q."/>
            <person name="Zhang L."/>
            <person name="Lu Y."/>
            <person name="Mu J."/>
            <person name="Lu Y."/>
            <person name="Zhang L.S."/>
            <person name="Yu Z."/>
            <person name="Fan D."/>
            <person name="Liu X."/>
            <person name="Lu T."/>
            <person name="Li C."/>
            <person name="Wu Y."/>
            <person name="Sun T."/>
            <person name="Lei H."/>
            <person name="Li T."/>
            <person name="Hu H."/>
            <person name="Guan J."/>
            <person name="Wu M."/>
            <person name="Zhang R."/>
            <person name="Zhou B."/>
            <person name="Chen Z."/>
            <person name="Chen L."/>
            <person name="Jin Z."/>
            <person name="Wang R."/>
            <person name="Yin H."/>
            <person name="Cai Z."/>
            <person name="Ren S."/>
            <person name="Lv G."/>
            <person name="Gu W."/>
            <person name="Zhu G."/>
            <person name="Tu Y."/>
            <person name="Jia J."/>
            <person name="Zhang Y."/>
            <person name="Chen J."/>
            <person name="Kang H."/>
            <person name="Chen X."/>
            <person name="Shao C."/>
            <person name="Sun Y."/>
            <person name="Hu Q."/>
            <person name="Zhang X."/>
            <person name="Zhang W."/>
            <person name="Wang L."/>
            <person name="Ding C."/>
            <person name="Sheng H."/>
            <person name="Gu J."/>
            <person name="Chen S."/>
            <person name="Ni L."/>
            <person name="Zhu F."/>
            <person name="Chen W."/>
            <person name="Lan L."/>
            <person name="Lai Y."/>
            <person name="Cheng Z."/>
            <person name="Gu M."/>
            <person name="Jiang J."/>
            <person name="Li J."/>
            <person name="Hong G."/>
            <person name="Xue Y."/>
            <person name="Han B."/>
        </authorList>
    </citation>
    <scope>NUCLEOTIDE SEQUENCE [LARGE SCALE GENOMIC DNA]</scope>
    <source>
        <strain>cv. Nipponbare</strain>
    </source>
</reference>
<reference key="3">
    <citation type="journal article" date="2005" name="Nature">
        <title>The map-based sequence of the rice genome.</title>
        <authorList>
            <consortium name="International rice genome sequencing project (IRGSP)"/>
        </authorList>
    </citation>
    <scope>NUCLEOTIDE SEQUENCE [LARGE SCALE GENOMIC DNA]</scope>
    <source>
        <strain>cv. Nipponbare</strain>
    </source>
</reference>
<reference key="4">
    <citation type="journal article" date="2008" name="Nucleic Acids Res.">
        <title>The rice annotation project database (RAP-DB): 2008 update.</title>
        <authorList>
            <consortium name="The rice annotation project (RAP)"/>
        </authorList>
    </citation>
    <scope>GENOME REANNOTATION</scope>
    <source>
        <strain>cv. Nipponbare</strain>
    </source>
</reference>
<reference key="5">
    <citation type="journal article" date="2013" name="Rice">
        <title>Improvement of the Oryza sativa Nipponbare reference genome using next generation sequence and optical map data.</title>
        <authorList>
            <person name="Kawahara Y."/>
            <person name="de la Bastide M."/>
            <person name="Hamilton J.P."/>
            <person name="Kanamori H."/>
            <person name="McCombie W.R."/>
            <person name="Ouyang S."/>
            <person name="Schwartz D.C."/>
            <person name="Tanaka T."/>
            <person name="Wu J."/>
            <person name="Zhou S."/>
            <person name="Childs K.L."/>
            <person name="Davidson R.M."/>
            <person name="Lin H."/>
            <person name="Quesada-Ocampo L."/>
            <person name="Vaillancourt B."/>
            <person name="Sakai H."/>
            <person name="Lee S.S."/>
            <person name="Kim J."/>
            <person name="Numa H."/>
            <person name="Itoh T."/>
            <person name="Buell C.R."/>
            <person name="Matsumoto T."/>
        </authorList>
    </citation>
    <scope>GENOME REANNOTATION</scope>
    <source>
        <strain>cv. Nipponbare</strain>
    </source>
</reference>
<reference key="6">
    <citation type="journal article" date="2010" name="BMC Plant Biol.">
        <title>The protein disulfide isomerase gene family in bread wheat (T. aestivum L.).</title>
        <authorList>
            <person name="d'Aloisio E."/>
            <person name="Paolacci A.R."/>
            <person name="Dhanapal A.P."/>
            <person name="Tanzarella O.A."/>
            <person name="Porceddu E."/>
            <person name="Ciaffi M."/>
        </authorList>
    </citation>
    <scope>GENE FAMILY</scope>
    <scope>NOMENCLATURE</scope>
</reference>
<accession>Q7XRB5</accession>
<accession>Q0JD21</accession>
<comment type="function">
    <text evidence="1">Acts as a protein-folding catalyst that interacts with nascent polypeptides to catalyze the formation, isomerization, and reduction or oxidation of disulfide bonds. May play a role in storage protein biogenesis (By similarity).</text>
</comment>
<comment type="catalytic activity">
    <reaction>
        <text>Catalyzes the rearrangement of -S-S- bonds in proteins.</text>
        <dbReference type="EC" id="5.3.4.1"/>
    </reaction>
</comment>
<comment type="subcellular location">
    <subcellularLocation>
        <location evidence="5">Endoplasmic reticulum lumen</location>
    </subcellularLocation>
</comment>
<comment type="similarity">
    <text evidence="5">Belongs to the protein disulfide isomerase family.</text>
</comment>
<proteinExistence type="evidence at transcript level"/>
<sequence length="517" mass="57335">MAVNLVLSFALAILISSSPTAVGVDATEELKEAVLTLDAGNFSEVVAKHPFIVVKFYAPWCGHCKQLAPEYEKAASILRKNELPVVLAKVDAYNERNKELKDKYGVYSYPTIKIMKNGGSDVRGYGGPREADGIVEYLKRQVGPASLKLESAEEAAHSVVDKGVILVGVFPEFAGMEYENFMVVAEKMRADYDFFHTSDASILPRGDQSVKGPIVRLFKPFDELFVDSEDFGKDALEKFIEVSGFPMVVTYDADPTNHKFLERYYSTPSSKAMLFVSFGDDRIESFKSQIHEAARKFSGNNISFLIGDVADADRVFQYFGLRESDVPLLFVIASTGKYLNPTMDPDQIIPWLKQYIVEYGNLTPYVKSEPIPKVNDQPVKVVVADNIDDIVFNSGKNVLLEFYAPWCGHCRKFALILEEIAVSLQDDQDIVIAKMDGTVNDIPTDFTVEGYPTIYFYSSSGNLLSYDGARTAEEIISFINENRGPKAGAAAAVDEKTQIDAVEEEVTSSSEPVKDEL</sequence>
<dbReference type="EC" id="5.3.4.1"/>
<dbReference type="EMBL" id="AY739308">
    <property type="protein sequence ID" value="AAX14679.1"/>
    <property type="molecule type" value="mRNA"/>
</dbReference>
<dbReference type="EMBL" id="AL606592">
    <property type="protein sequence ID" value="CAE02742.2"/>
    <property type="molecule type" value="Genomic_DNA"/>
</dbReference>
<dbReference type="EMBL" id="AP008210">
    <property type="protein sequence ID" value="BAF14766.2"/>
    <property type="molecule type" value="Genomic_DNA"/>
</dbReference>
<dbReference type="EMBL" id="AP014960">
    <property type="status" value="NOT_ANNOTATED_CDS"/>
    <property type="molecule type" value="Genomic_DNA"/>
</dbReference>
<dbReference type="SMR" id="Q7XRB5"/>
<dbReference type="FunCoup" id="Q7XRB5">
    <property type="interactions" value="1571"/>
</dbReference>
<dbReference type="STRING" id="39947.Q7XRB5"/>
<dbReference type="GlyCosmos" id="Q7XRB5">
    <property type="glycosylation" value="2 sites, No reported glycans"/>
</dbReference>
<dbReference type="PaxDb" id="39947-Q7XRB5"/>
<dbReference type="KEGG" id="dosa:Os04g0436300"/>
<dbReference type="eggNOG" id="KOG0190">
    <property type="taxonomic scope" value="Eukaryota"/>
</dbReference>
<dbReference type="HOGENOM" id="CLU_093031_0_0_1"/>
<dbReference type="InParanoid" id="Q7XRB5"/>
<dbReference type="Proteomes" id="UP000000763">
    <property type="component" value="Chromosome 4"/>
</dbReference>
<dbReference type="Proteomes" id="UP000059680">
    <property type="component" value="Chromosome 4"/>
</dbReference>
<dbReference type="GO" id="GO:0005783">
    <property type="term" value="C:endoplasmic reticulum"/>
    <property type="evidence" value="ECO:0000318"/>
    <property type="project" value="GO_Central"/>
</dbReference>
<dbReference type="GO" id="GO:0005788">
    <property type="term" value="C:endoplasmic reticulum lumen"/>
    <property type="evidence" value="ECO:0007669"/>
    <property type="project" value="UniProtKB-SubCell"/>
</dbReference>
<dbReference type="GO" id="GO:0003756">
    <property type="term" value="F:protein disulfide isomerase activity"/>
    <property type="evidence" value="ECO:0000318"/>
    <property type="project" value="GO_Central"/>
</dbReference>
<dbReference type="GO" id="GO:0006457">
    <property type="term" value="P:protein folding"/>
    <property type="evidence" value="ECO:0000318"/>
    <property type="project" value="GO_Central"/>
</dbReference>
<dbReference type="GO" id="GO:0034976">
    <property type="term" value="P:response to endoplasmic reticulum stress"/>
    <property type="evidence" value="ECO:0000318"/>
    <property type="project" value="GO_Central"/>
</dbReference>
<dbReference type="CDD" id="cd02961">
    <property type="entry name" value="PDI_a_family"/>
    <property type="match status" value="1"/>
</dbReference>
<dbReference type="CDD" id="cd02995">
    <property type="entry name" value="PDI_a_PDI_a'_C"/>
    <property type="match status" value="1"/>
</dbReference>
<dbReference type="CDD" id="cd02982">
    <property type="entry name" value="PDI_b'_family"/>
    <property type="match status" value="1"/>
</dbReference>
<dbReference type="CDD" id="cd02981">
    <property type="entry name" value="PDI_b_family"/>
    <property type="match status" value="1"/>
</dbReference>
<dbReference type="FunFam" id="3.40.30.10:FF:000143">
    <property type="entry name" value="Protein disulfide-isomerase"/>
    <property type="match status" value="1"/>
</dbReference>
<dbReference type="FunFam" id="3.40.30.10:FF:000150">
    <property type="entry name" value="Protein disulfide-isomerase"/>
    <property type="match status" value="1"/>
</dbReference>
<dbReference type="FunFam" id="3.40.30.10:FF:000152">
    <property type="entry name" value="Protein disulfide-isomerase"/>
    <property type="match status" value="1"/>
</dbReference>
<dbReference type="FunFam" id="3.40.30.10:FF:000184">
    <property type="entry name" value="Protein disulfide-isomerase"/>
    <property type="match status" value="1"/>
</dbReference>
<dbReference type="Gene3D" id="3.40.30.10">
    <property type="entry name" value="Glutaredoxin"/>
    <property type="match status" value="4"/>
</dbReference>
<dbReference type="InterPro" id="IPR005788">
    <property type="entry name" value="PDI_thioredoxin-like_dom"/>
</dbReference>
<dbReference type="InterPro" id="IPR005792">
    <property type="entry name" value="Prot_disulphide_isomerase"/>
</dbReference>
<dbReference type="InterPro" id="IPR036249">
    <property type="entry name" value="Thioredoxin-like_sf"/>
</dbReference>
<dbReference type="InterPro" id="IPR017937">
    <property type="entry name" value="Thioredoxin_CS"/>
</dbReference>
<dbReference type="InterPro" id="IPR013766">
    <property type="entry name" value="Thioredoxin_domain"/>
</dbReference>
<dbReference type="NCBIfam" id="TIGR01130">
    <property type="entry name" value="ER_PDI_fam"/>
    <property type="match status" value="1"/>
</dbReference>
<dbReference type="NCBIfam" id="TIGR01126">
    <property type="entry name" value="pdi_dom"/>
    <property type="match status" value="1"/>
</dbReference>
<dbReference type="PANTHER" id="PTHR18929">
    <property type="entry name" value="PROTEIN DISULFIDE ISOMERASE"/>
    <property type="match status" value="1"/>
</dbReference>
<dbReference type="PANTHER" id="PTHR18929:SF211">
    <property type="entry name" value="PROTEIN DISULFIDE ISOMERASE-LIKE 1-2"/>
    <property type="match status" value="1"/>
</dbReference>
<dbReference type="Pfam" id="PF00085">
    <property type="entry name" value="Thioredoxin"/>
    <property type="match status" value="2"/>
</dbReference>
<dbReference type="Pfam" id="PF13848">
    <property type="entry name" value="Thioredoxin_6"/>
    <property type="match status" value="1"/>
</dbReference>
<dbReference type="PRINTS" id="PR00421">
    <property type="entry name" value="THIOREDOXIN"/>
</dbReference>
<dbReference type="SUPFAM" id="SSF52833">
    <property type="entry name" value="Thioredoxin-like"/>
    <property type="match status" value="4"/>
</dbReference>
<dbReference type="PROSITE" id="PS00014">
    <property type="entry name" value="ER_TARGET"/>
    <property type="match status" value="1"/>
</dbReference>
<dbReference type="PROSITE" id="PS00194">
    <property type="entry name" value="THIOREDOXIN_1"/>
    <property type="match status" value="2"/>
</dbReference>
<dbReference type="PROSITE" id="PS51352">
    <property type="entry name" value="THIOREDOXIN_2"/>
    <property type="match status" value="2"/>
</dbReference>
<keyword id="KW-1015">Disulfide bond</keyword>
<keyword id="KW-0256">Endoplasmic reticulum</keyword>
<keyword id="KW-0325">Glycoprotein</keyword>
<keyword id="KW-0413">Isomerase</keyword>
<keyword id="KW-0676">Redox-active center</keyword>
<keyword id="KW-1185">Reference proteome</keyword>
<keyword id="KW-0677">Repeat</keyword>
<keyword id="KW-0732">Signal</keyword>
<organism>
    <name type="scientific">Oryza sativa subsp. japonica</name>
    <name type="common">Rice</name>
    <dbReference type="NCBI Taxonomy" id="39947"/>
    <lineage>
        <taxon>Eukaryota</taxon>
        <taxon>Viridiplantae</taxon>
        <taxon>Streptophyta</taxon>
        <taxon>Embryophyta</taxon>
        <taxon>Tracheophyta</taxon>
        <taxon>Spermatophyta</taxon>
        <taxon>Magnoliopsida</taxon>
        <taxon>Liliopsida</taxon>
        <taxon>Poales</taxon>
        <taxon>Poaceae</taxon>
        <taxon>BOP clade</taxon>
        <taxon>Oryzoideae</taxon>
        <taxon>Oryzeae</taxon>
        <taxon>Oryzinae</taxon>
        <taxon>Oryza</taxon>
        <taxon>Oryza sativa</taxon>
    </lineage>
</organism>
<gene>
    <name type="primary">PDIL1-2</name>
    <name type="ordered locus">Os04g0436300</name>
    <name type="ordered locus">LOC_Os04g35600</name>
    <name type="ORF">OSJNBa0006B20.4</name>
</gene>
<feature type="signal peptide" evidence="2">
    <location>
        <begin position="1"/>
        <end position="23"/>
    </location>
</feature>
<feature type="chain" id="PRO_0000400029" description="Protein disulfide isomerase-like 1-2">
    <location>
        <begin position="24"/>
        <end position="517"/>
    </location>
</feature>
<feature type="domain" description="Thioredoxin 1" evidence="3">
    <location>
        <begin position="24"/>
        <end position="143"/>
    </location>
</feature>
<feature type="domain" description="Thioredoxin 2" evidence="3">
    <location>
        <begin position="357"/>
        <end position="484"/>
    </location>
</feature>
<feature type="short sequence motif" description="Prevents secretion from ER" evidence="4">
    <location>
        <begin position="514"/>
        <end position="517"/>
    </location>
</feature>
<feature type="active site" description="Nucleophile" evidence="1">
    <location>
        <position position="61"/>
    </location>
</feature>
<feature type="active site" description="Nucleophile" evidence="1">
    <location>
        <position position="64"/>
    </location>
</feature>
<feature type="active site" description="Nucleophile" evidence="1">
    <location>
        <position position="407"/>
    </location>
</feature>
<feature type="active site" description="Nucleophile" evidence="1">
    <location>
        <position position="410"/>
    </location>
</feature>
<feature type="site" description="Contributes to redox potential value" evidence="1">
    <location>
        <position position="62"/>
    </location>
</feature>
<feature type="site" description="Contributes to redox potential value" evidence="1">
    <location>
        <position position="63"/>
    </location>
</feature>
<feature type="site" description="Lowers pKa of C-terminal Cys of first active site" evidence="1">
    <location>
        <position position="129"/>
    </location>
</feature>
<feature type="site" description="Contributes to redox potential value" evidence="1">
    <location>
        <position position="408"/>
    </location>
</feature>
<feature type="site" description="Contributes to redox potential value" evidence="1">
    <location>
        <position position="409"/>
    </location>
</feature>
<feature type="site" description="Lowers pKa of C-terminal Cys of second active site" evidence="1">
    <location>
        <position position="470"/>
    </location>
</feature>
<feature type="glycosylation site" description="N-linked (GlcNAc...) asparagine" evidence="2">
    <location>
        <position position="41"/>
    </location>
</feature>
<feature type="glycosylation site" description="N-linked (GlcNAc...) asparagine" evidence="2">
    <location>
        <position position="301"/>
    </location>
</feature>
<feature type="disulfide bond" description="Redox-active" evidence="3">
    <location>
        <begin position="61"/>
        <end position="64"/>
    </location>
</feature>
<feature type="disulfide bond" description="Redox-active" evidence="3">
    <location>
        <begin position="407"/>
        <end position="410"/>
    </location>
</feature>
<evidence type="ECO:0000250" key="1"/>
<evidence type="ECO:0000255" key="2"/>
<evidence type="ECO:0000255" key="3">
    <source>
        <dbReference type="PROSITE-ProRule" id="PRU00691"/>
    </source>
</evidence>
<evidence type="ECO:0000255" key="4">
    <source>
        <dbReference type="PROSITE-ProRule" id="PRU10138"/>
    </source>
</evidence>
<evidence type="ECO:0000305" key="5"/>
<protein>
    <recommendedName>
        <fullName>Protein disulfide isomerase-like 1-2</fullName>
        <shortName>OsPDIL1-2</shortName>
        <ecNumber>5.3.4.1</ecNumber>
    </recommendedName>
</protein>